<sequence length="249" mass="27386">MEELILGIVQGLTEFLPISSSGHLAIFTAIFNSTPDVGYFAFLHLATFLAVLIFVKSEVFEIINGISKKDKEYINLASKLVLSTIPAVFVGLFFGDFIESVFSSTYLIGIFLSITGILMLLSDKLNKNLKTIKSIPYFDALIVGVFQAFSVLPGISRSGTTLFAALFLGMKKEDAVKYSFLMSLPVTFGAGILELHNVAFSTEQIFGFVISFLTGLLGLYLVKRMVIGGKLKIFGYYCFLASFFVLTFL</sequence>
<keyword id="KW-1003">Cell membrane</keyword>
<keyword id="KW-0378">Hydrolase</keyword>
<keyword id="KW-0472">Membrane</keyword>
<keyword id="KW-0812">Transmembrane</keyword>
<keyword id="KW-1133">Transmembrane helix</keyword>
<organism>
    <name type="scientific">Methanococcus maripaludis (strain C7 / ATCC BAA-1331)</name>
    <dbReference type="NCBI Taxonomy" id="426368"/>
    <lineage>
        <taxon>Archaea</taxon>
        <taxon>Methanobacteriati</taxon>
        <taxon>Methanobacteriota</taxon>
        <taxon>Methanomada group</taxon>
        <taxon>Methanococci</taxon>
        <taxon>Methanococcales</taxon>
        <taxon>Methanococcaceae</taxon>
        <taxon>Methanococcus</taxon>
    </lineage>
</organism>
<gene>
    <name evidence="1" type="primary">uppP</name>
    <name type="ordered locus">MmarC7_0394</name>
</gene>
<proteinExistence type="inferred from homology"/>
<evidence type="ECO:0000255" key="1">
    <source>
        <dbReference type="HAMAP-Rule" id="MF_01006"/>
    </source>
</evidence>
<reference key="1">
    <citation type="submission" date="2007-06" db="EMBL/GenBank/DDBJ databases">
        <title>Complete sequence of Methanococcus maripaludis C7.</title>
        <authorList>
            <consortium name="US DOE Joint Genome Institute"/>
            <person name="Copeland A."/>
            <person name="Lucas S."/>
            <person name="Lapidus A."/>
            <person name="Barry K."/>
            <person name="Glavina del Rio T."/>
            <person name="Dalin E."/>
            <person name="Tice H."/>
            <person name="Pitluck S."/>
            <person name="Clum A."/>
            <person name="Schmutz J."/>
            <person name="Larimer F."/>
            <person name="Land M."/>
            <person name="Hauser L."/>
            <person name="Kyrpides N."/>
            <person name="Anderson I."/>
            <person name="Sieprawska-Lupa M."/>
            <person name="Whitman W.B."/>
            <person name="Richardson P."/>
        </authorList>
    </citation>
    <scope>NUCLEOTIDE SEQUENCE [LARGE SCALE GENOMIC DNA]</scope>
    <source>
        <strain>C7 / ATCC BAA-1331</strain>
    </source>
</reference>
<protein>
    <recommendedName>
        <fullName evidence="1">Undecaprenyl-diphosphatase</fullName>
        <ecNumber evidence="1">3.6.1.27</ecNumber>
    </recommendedName>
    <alternativeName>
        <fullName evidence="1">Undecaprenyl pyrophosphate phosphatase</fullName>
    </alternativeName>
</protein>
<name>UPPP_METM7</name>
<accession>A6VG87</accession>
<dbReference type="EC" id="3.6.1.27" evidence="1"/>
<dbReference type="EMBL" id="CP000745">
    <property type="protein sequence ID" value="ABR65463.1"/>
    <property type="molecule type" value="Genomic_DNA"/>
</dbReference>
<dbReference type="SMR" id="A6VG87"/>
<dbReference type="STRING" id="426368.MmarC7_0394"/>
<dbReference type="KEGG" id="mmz:MmarC7_0394"/>
<dbReference type="eggNOG" id="arCOG04761">
    <property type="taxonomic scope" value="Archaea"/>
</dbReference>
<dbReference type="HOGENOM" id="CLU_060296_1_2_2"/>
<dbReference type="OrthoDB" id="65864at2157"/>
<dbReference type="GO" id="GO:0005886">
    <property type="term" value="C:plasma membrane"/>
    <property type="evidence" value="ECO:0007669"/>
    <property type="project" value="UniProtKB-SubCell"/>
</dbReference>
<dbReference type="GO" id="GO:0050380">
    <property type="term" value="F:undecaprenyl-diphosphatase activity"/>
    <property type="evidence" value="ECO:0007669"/>
    <property type="project" value="UniProtKB-UniRule"/>
</dbReference>
<dbReference type="HAMAP" id="MF_01006">
    <property type="entry name" value="Undec_diphosphatase"/>
    <property type="match status" value="1"/>
</dbReference>
<dbReference type="InterPro" id="IPR003824">
    <property type="entry name" value="UppP"/>
</dbReference>
<dbReference type="PANTHER" id="PTHR30622">
    <property type="entry name" value="UNDECAPRENYL-DIPHOSPHATASE"/>
    <property type="match status" value="1"/>
</dbReference>
<dbReference type="PANTHER" id="PTHR30622:SF4">
    <property type="entry name" value="UNDECAPRENYL-DIPHOSPHATASE"/>
    <property type="match status" value="1"/>
</dbReference>
<dbReference type="Pfam" id="PF02673">
    <property type="entry name" value="BacA"/>
    <property type="match status" value="1"/>
</dbReference>
<comment type="function">
    <text evidence="1">Catalyzes the dephosphorylation of undecaprenyl diphosphate (UPP).</text>
</comment>
<comment type="catalytic activity">
    <reaction evidence="1">
        <text>di-trans,octa-cis-undecaprenyl diphosphate + H2O = di-trans,octa-cis-undecaprenyl phosphate + phosphate + H(+)</text>
        <dbReference type="Rhea" id="RHEA:28094"/>
        <dbReference type="ChEBI" id="CHEBI:15377"/>
        <dbReference type="ChEBI" id="CHEBI:15378"/>
        <dbReference type="ChEBI" id="CHEBI:43474"/>
        <dbReference type="ChEBI" id="CHEBI:58405"/>
        <dbReference type="ChEBI" id="CHEBI:60392"/>
        <dbReference type="EC" id="3.6.1.27"/>
    </reaction>
</comment>
<comment type="subcellular location">
    <subcellularLocation>
        <location evidence="1">Cell membrane</location>
        <topology evidence="1">Multi-pass membrane protein</topology>
    </subcellularLocation>
</comment>
<comment type="similarity">
    <text evidence="1">Belongs to the UppP family.</text>
</comment>
<feature type="chain" id="PRO_1000062804" description="Undecaprenyl-diphosphatase">
    <location>
        <begin position="1"/>
        <end position="249"/>
    </location>
</feature>
<feature type="transmembrane region" description="Helical" evidence="1">
    <location>
        <begin position="11"/>
        <end position="31"/>
    </location>
</feature>
<feature type="transmembrane region" description="Helical" evidence="1">
    <location>
        <begin position="35"/>
        <end position="55"/>
    </location>
</feature>
<feature type="transmembrane region" description="Helical" evidence="1">
    <location>
        <begin position="80"/>
        <end position="100"/>
    </location>
</feature>
<feature type="transmembrane region" description="Helical" evidence="1">
    <location>
        <begin position="101"/>
        <end position="121"/>
    </location>
</feature>
<feature type="transmembrane region" description="Helical" evidence="1">
    <location>
        <begin position="135"/>
        <end position="155"/>
    </location>
</feature>
<feature type="transmembrane region" description="Helical" evidence="1">
    <location>
        <begin position="180"/>
        <end position="200"/>
    </location>
</feature>
<feature type="transmembrane region" description="Helical" evidence="1">
    <location>
        <begin position="202"/>
        <end position="222"/>
    </location>
</feature>
<feature type="transmembrane region" description="Helical" evidence="1">
    <location>
        <begin position="226"/>
        <end position="246"/>
    </location>
</feature>